<sequence length="466" mass="51030">MKTTVEKLSPTRTKLTISVTPEELQPSIKHAYEHIAGQVNIPGFRKGKVPPAIIDQRVGKEAVLEHAVNEGLDGFYRLAVEENEVRPLGRPEADISEWPNEKDFSGDLLLTIEVDVRPEITLPAFDGITLTVEAAQVTPDDVEEELDRLRSRFCTLVTVDRPAKKGDFAQIDLVAEIGGEEVDTAANISYEIGSGELIEGIDEALDTLTAGETTTFEAPLMGGDHEGENAQITVTLNAVKERELPEADDDFAQISSEFDTIGELRESLRGQVERAKSFGQGTAARDQLVEKLLELVEIPVPAQLVEDEVSRHLEQESRLEDDEHRAEVTESSEKTFRTQILLDEIAQRENVKVSQDELTQYLVQGAAQYNMDPNEFVKILGENGQISSMVGEIARNKALAIVLGKAEVVDTNGKQVDLTEFVALPDDGEAVDEDATPEDTDAPAEEAPAAEKPKKKAAAKKKAADK</sequence>
<evidence type="ECO:0000255" key="1">
    <source>
        <dbReference type="HAMAP-Rule" id="MF_00303"/>
    </source>
</evidence>
<evidence type="ECO:0000256" key="2">
    <source>
        <dbReference type="SAM" id="MobiDB-lite"/>
    </source>
</evidence>
<proteinExistence type="inferred from homology"/>
<feature type="chain" id="PRO_0000179372" description="Trigger factor">
    <location>
        <begin position="1"/>
        <end position="466"/>
    </location>
</feature>
<feature type="domain" description="PPIase FKBP-type" evidence="1">
    <location>
        <begin position="166"/>
        <end position="245"/>
    </location>
</feature>
<feature type="region of interest" description="Disordered" evidence="2">
    <location>
        <begin position="313"/>
        <end position="332"/>
    </location>
</feature>
<feature type="region of interest" description="Disordered" evidence="2">
    <location>
        <begin position="424"/>
        <end position="466"/>
    </location>
</feature>
<feature type="compositionally biased region" description="Acidic residues" evidence="2">
    <location>
        <begin position="426"/>
        <end position="444"/>
    </location>
</feature>
<feature type="compositionally biased region" description="Basic residues" evidence="2">
    <location>
        <begin position="453"/>
        <end position="466"/>
    </location>
</feature>
<organism>
    <name type="scientific">Leifsonia xyli subsp. xyli (strain CTCB07)</name>
    <dbReference type="NCBI Taxonomy" id="281090"/>
    <lineage>
        <taxon>Bacteria</taxon>
        <taxon>Bacillati</taxon>
        <taxon>Actinomycetota</taxon>
        <taxon>Actinomycetes</taxon>
        <taxon>Micrococcales</taxon>
        <taxon>Microbacteriaceae</taxon>
        <taxon>Leifsonia</taxon>
    </lineage>
</organism>
<comment type="function">
    <text evidence="1">Involved in protein export. Acts as a chaperone by maintaining the newly synthesized protein in an open conformation. Functions as a peptidyl-prolyl cis-trans isomerase.</text>
</comment>
<comment type="catalytic activity">
    <reaction evidence="1">
        <text>[protein]-peptidylproline (omega=180) = [protein]-peptidylproline (omega=0)</text>
        <dbReference type="Rhea" id="RHEA:16237"/>
        <dbReference type="Rhea" id="RHEA-COMP:10747"/>
        <dbReference type="Rhea" id="RHEA-COMP:10748"/>
        <dbReference type="ChEBI" id="CHEBI:83833"/>
        <dbReference type="ChEBI" id="CHEBI:83834"/>
        <dbReference type="EC" id="5.2.1.8"/>
    </reaction>
</comment>
<comment type="subcellular location">
    <subcellularLocation>
        <location>Cytoplasm</location>
    </subcellularLocation>
    <text evidence="1">About half TF is bound to the ribosome near the polypeptide exit tunnel while the other half is free in the cytoplasm.</text>
</comment>
<comment type="domain">
    <text evidence="1">Consists of 3 domains; the N-terminus binds the ribosome, the middle domain has PPIase activity, while the C-terminus has intrinsic chaperone activity on its own.</text>
</comment>
<comment type="similarity">
    <text evidence="1">Belongs to the FKBP-type PPIase family. Tig subfamily.</text>
</comment>
<keyword id="KW-0131">Cell cycle</keyword>
<keyword id="KW-0132">Cell division</keyword>
<keyword id="KW-0143">Chaperone</keyword>
<keyword id="KW-0963">Cytoplasm</keyword>
<keyword id="KW-0413">Isomerase</keyword>
<keyword id="KW-1185">Reference proteome</keyword>
<keyword id="KW-0697">Rotamase</keyword>
<name>TIG_LEIXX</name>
<accession>Q6AG00</accession>
<dbReference type="EC" id="5.2.1.8" evidence="1"/>
<dbReference type="EMBL" id="AE016822">
    <property type="protein sequence ID" value="AAT88695.1"/>
    <property type="molecule type" value="Genomic_DNA"/>
</dbReference>
<dbReference type="RefSeq" id="WP_011185693.1">
    <property type="nucleotide sequence ID" value="NC_006087.1"/>
</dbReference>
<dbReference type="SMR" id="Q6AG00"/>
<dbReference type="STRING" id="281090.Lxx07830"/>
<dbReference type="KEGG" id="lxx:Lxx07830"/>
<dbReference type="eggNOG" id="COG0544">
    <property type="taxonomic scope" value="Bacteria"/>
</dbReference>
<dbReference type="HOGENOM" id="CLU_033058_3_0_11"/>
<dbReference type="Proteomes" id="UP000001306">
    <property type="component" value="Chromosome"/>
</dbReference>
<dbReference type="GO" id="GO:0005737">
    <property type="term" value="C:cytoplasm"/>
    <property type="evidence" value="ECO:0007669"/>
    <property type="project" value="UniProtKB-SubCell"/>
</dbReference>
<dbReference type="GO" id="GO:0003755">
    <property type="term" value="F:peptidyl-prolyl cis-trans isomerase activity"/>
    <property type="evidence" value="ECO:0007669"/>
    <property type="project" value="UniProtKB-UniRule"/>
</dbReference>
<dbReference type="GO" id="GO:0044183">
    <property type="term" value="F:protein folding chaperone"/>
    <property type="evidence" value="ECO:0007669"/>
    <property type="project" value="TreeGrafter"/>
</dbReference>
<dbReference type="GO" id="GO:0043022">
    <property type="term" value="F:ribosome binding"/>
    <property type="evidence" value="ECO:0007669"/>
    <property type="project" value="TreeGrafter"/>
</dbReference>
<dbReference type="GO" id="GO:0051083">
    <property type="term" value="P:'de novo' cotranslational protein folding"/>
    <property type="evidence" value="ECO:0007669"/>
    <property type="project" value="TreeGrafter"/>
</dbReference>
<dbReference type="GO" id="GO:0051301">
    <property type="term" value="P:cell division"/>
    <property type="evidence" value="ECO:0007669"/>
    <property type="project" value="UniProtKB-KW"/>
</dbReference>
<dbReference type="GO" id="GO:0061077">
    <property type="term" value="P:chaperone-mediated protein folding"/>
    <property type="evidence" value="ECO:0007669"/>
    <property type="project" value="TreeGrafter"/>
</dbReference>
<dbReference type="GO" id="GO:0015031">
    <property type="term" value="P:protein transport"/>
    <property type="evidence" value="ECO:0007669"/>
    <property type="project" value="UniProtKB-UniRule"/>
</dbReference>
<dbReference type="GO" id="GO:0043335">
    <property type="term" value="P:protein unfolding"/>
    <property type="evidence" value="ECO:0007669"/>
    <property type="project" value="TreeGrafter"/>
</dbReference>
<dbReference type="Gene3D" id="3.10.50.40">
    <property type="match status" value="1"/>
</dbReference>
<dbReference type="Gene3D" id="3.30.70.1050">
    <property type="entry name" value="Trigger factor ribosome-binding domain"/>
    <property type="match status" value="1"/>
</dbReference>
<dbReference type="Gene3D" id="1.10.3120.10">
    <property type="entry name" value="Trigger factor, C-terminal domain"/>
    <property type="match status" value="1"/>
</dbReference>
<dbReference type="HAMAP" id="MF_00303">
    <property type="entry name" value="Trigger_factor_Tig"/>
    <property type="match status" value="1"/>
</dbReference>
<dbReference type="InterPro" id="IPR046357">
    <property type="entry name" value="PPIase_dom_sf"/>
</dbReference>
<dbReference type="InterPro" id="IPR001179">
    <property type="entry name" value="PPIase_FKBP_dom"/>
</dbReference>
<dbReference type="InterPro" id="IPR005215">
    <property type="entry name" value="Trig_fac"/>
</dbReference>
<dbReference type="InterPro" id="IPR008880">
    <property type="entry name" value="Trigger_fac_C"/>
</dbReference>
<dbReference type="InterPro" id="IPR037041">
    <property type="entry name" value="Trigger_fac_C_sf"/>
</dbReference>
<dbReference type="InterPro" id="IPR008881">
    <property type="entry name" value="Trigger_fac_ribosome-bd_bac"/>
</dbReference>
<dbReference type="InterPro" id="IPR036611">
    <property type="entry name" value="Trigger_fac_ribosome-bd_sf"/>
</dbReference>
<dbReference type="InterPro" id="IPR027304">
    <property type="entry name" value="Trigger_fact/SurA_dom_sf"/>
</dbReference>
<dbReference type="NCBIfam" id="TIGR00115">
    <property type="entry name" value="tig"/>
    <property type="match status" value="1"/>
</dbReference>
<dbReference type="PANTHER" id="PTHR30560">
    <property type="entry name" value="TRIGGER FACTOR CHAPERONE AND PEPTIDYL-PROLYL CIS/TRANS ISOMERASE"/>
    <property type="match status" value="1"/>
</dbReference>
<dbReference type="PANTHER" id="PTHR30560:SF3">
    <property type="entry name" value="TRIGGER FACTOR-LIKE PROTEIN TIG, CHLOROPLASTIC"/>
    <property type="match status" value="1"/>
</dbReference>
<dbReference type="Pfam" id="PF00254">
    <property type="entry name" value="FKBP_C"/>
    <property type="match status" value="1"/>
</dbReference>
<dbReference type="Pfam" id="PF05698">
    <property type="entry name" value="Trigger_C"/>
    <property type="match status" value="1"/>
</dbReference>
<dbReference type="Pfam" id="PF05697">
    <property type="entry name" value="Trigger_N"/>
    <property type="match status" value="1"/>
</dbReference>
<dbReference type="PIRSF" id="PIRSF003095">
    <property type="entry name" value="Trigger_factor"/>
    <property type="match status" value="1"/>
</dbReference>
<dbReference type="SUPFAM" id="SSF54534">
    <property type="entry name" value="FKBP-like"/>
    <property type="match status" value="1"/>
</dbReference>
<dbReference type="SUPFAM" id="SSF109998">
    <property type="entry name" value="Triger factor/SurA peptide-binding domain-like"/>
    <property type="match status" value="1"/>
</dbReference>
<dbReference type="SUPFAM" id="SSF102735">
    <property type="entry name" value="Trigger factor ribosome-binding domain"/>
    <property type="match status" value="1"/>
</dbReference>
<dbReference type="PROSITE" id="PS50059">
    <property type="entry name" value="FKBP_PPIASE"/>
    <property type="match status" value="1"/>
</dbReference>
<protein>
    <recommendedName>
        <fullName evidence="1">Trigger factor</fullName>
        <shortName evidence="1">TF</shortName>
        <ecNumber evidence="1">5.2.1.8</ecNumber>
    </recommendedName>
    <alternativeName>
        <fullName evidence="1">PPIase</fullName>
    </alternativeName>
</protein>
<reference key="1">
    <citation type="journal article" date="2004" name="Mol. Plant Microbe Interact.">
        <title>The genome sequence of the Gram-positive sugarcane pathogen Leifsonia xyli subsp. xyli.</title>
        <authorList>
            <person name="Monteiro-Vitorello C.B."/>
            <person name="Camargo L.E.A."/>
            <person name="Van Sluys M.A."/>
            <person name="Kitajima J.P."/>
            <person name="Truffi D."/>
            <person name="do Amaral A.M."/>
            <person name="Harakava R."/>
            <person name="de Oliveira J.C.F."/>
            <person name="Wood D."/>
            <person name="de Oliveira M.C."/>
            <person name="Miyaki C.Y."/>
            <person name="Takita M.A."/>
            <person name="da Silva A.C.R."/>
            <person name="Furlan L.R."/>
            <person name="Carraro D.M."/>
            <person name="Camarotte G."/>
            <person name="Almeida N.F. Jr."/>
            <person name="Carrer H."/>
            <person name="Coutinho L.L."/>
            <person name="El-Dorry H.A."/>
            <person name="Ferro M.I.T."/>
            <person name="Gagliardi P.R."/>
            <person name="Giglioti E."/>
            <person name="Goldman M.H.S."/>
            <person name="Goldman G.H."/>
            <person name="Kimura E.T."/>
            <person name="Ferro E.S."/>
            <person name="Kuramae E.E."/>
            <person name="Lemos E.G.M."/>
            <person name="Lemos M.V.F."/>
            <person name="Mauro S.M.Z."/>
            <person name="Machado M.A."/>
            <person name="Marino C.L."/>
            <person name="Menck C.F."/>
            <person name="Nunes L.R."/>
            <person name="Oliveira R.C."/>
            <person name="Pereira G.G."/>
            <person name="Siqueira W."/>
            <person name="de Souza A.A."/>
            <person name="Tsai S.M."/>
            <person name="Zanca A.S."/>
            <person name="Simpson A.J.G."/>
            <person name="Brumbley S.M."/>
            <person name="Setubal J.C."/>
        </authorList>
    </citation>
    <scope>NUCLEOTIDE SEQUENCE [LARGE SCALE GENOMIC DNA]</scope>
    <source>
        <strain>CTCB07</strain>
    </source>
</reference>
<gene>
    <name evidence="1" type="primary">tig</name>
    <name type="ordered locus">Lxx07830</name>
</gene>